<reference key="1">
    <citation type="journal article" date="1997" name="Microbiology">
        <title>The Staphylococcus aureus allelic genetic loci for serotype 5 and 8 capsule expression contain the type-specific genes flanked by common genes.</title>
        <authorList>
            <person name="Sau S."/>
            <person name="Bhasin N."/>
            <person name="Wann E.R."/>
            <person name="Lee J.C."/>
            <person name="Foster T.J."/>
            <person name="Lee C.Y."/>
        </authorList>
    </citation>
    <scope>NUCLEOTIDE SEQUENCE [GENOMIC DNA]</scope>
    <scope>FUNCTION</scope>
</reference>
<reference key="2">
    <citation type="journal article" date="2008" name="J. Bacteriol.">
        <title>Genome sequence of Staphylococcus aureus strain Newman and comparative analysis of staphylococcal genomes: polymorphism and evolution of two major pathogenicity islands.</title>
        <authorList>
            <person name="Baba T."/>
            <person name="Bae T."/>
            <person name="Schneewind O."/>
            <person name="Takeuchi F."/>
            <person name="Hiramatsu K."/>
        </authorList>
    </citation>
    <scope>NUCLEOTIDE SEQUENCE [LARGE SCALE GENOMIC DNA]</scope>
    <source>
        <strain>Newman</strain>
    </source>
</reference>
<sequence>MESTLELTKIKEVLQKNLKILIILPLLFLIISAIVTFFVLSPKYQANTQILVNQTKGDNPQFMAQEVQSNIQLVNTYKEIVKSPRILDEVSKDLNDKYSPSKLSSMLTITNQENTQLINIQVKSGHKQDSEKIANSFAKVTSKQIPKIMSVDNVSILSKADGTAVKVAPKTVVNLIGAFFLGLVVALIYIFFKVIFDKRIKDEEDVEKELGLPVLGSIQKFN</sequence>
<comment type="function">
    <text evidence="2">Required for the biosynthesis of type 5 capsular polysaccharide (Cap5/CP5). Might act as the chain-length regulator.</text>
</comment>
<comment type="subcellular location">
    <subcellularLocation>
        <location evidence="3">Cell membrane</location>
        <topology evidence="3">Multi-pass membrane protein</topology>
    </subcellularLocation>
</comment>
<comment type="similarity">
    <text evidence="3">Belongs to the CpsC/CapA family.</text>
</comment>
<evidence type="ECO:0000255" key="1"/>
<evidence type="ECO:0000269" key="2">
    <source>
    </source>
</evidence>
<evidence type="ECO:0000305" key="3"/>
<keyword id="KW-0972">Capsule biogenesis/degradation</keyword>
<keyword id="KW-1003">Cell membrane</keyword>
<keyword id="KW-0270">Exopolysaccharide synthesis</keyword>
<keyword id="KW-0472">Membrane</keyword>
<keyword id="KW-0812">Transmembrane</keyword>
<keyword id="KW-1133">Transmembrane helix</keyword>
<keyword id="KW-0843">Virulence</keyword>
<feature type="chain" id="PRO_0000217224" description="Capsular polysaccharide type 5 biosynthesis protein cap5A">
    <location>
        <begin position="1"/>
        <end position="222"/>
    </location>
</feature>
<feature type="transmembrane region" description="Helical" evidence="1">
    <location>
        <begin position="20"/>
        <end position="40"/>
    </location>
</feature>
<feature type="transmembrane region" description="Helical" evidence="1">
    <location>
        <begin position="172"/>
        <end position="192"/>
    </location>
</feature>
<accession>P95695</accession>
<accession>A6QDD5</accession>
<name>CAP5A_STAAE</name>
<protein>
    <recommendedName>
        <fullName>Capsular polysaccharide type 5 biosynthesis protein cap5A</fullName>
    </recommendedName>
</protein>
<gene>
    <name type="primary">cap5A</name>
    <name type="ordered locus">NWMN_0095</name>
</gene>
<proteinExistence type="inferred from homology"/>
<dbReference type="EMBL" id="U81973">
    <property type="protein sequence ID" value="AAC46084.1"/>
    <property type="molecule type" value="Genomic_DNA"/>
</dbReference>
<dbReference type="EMBL" id="AP009351">
    <property type="protein sequence ID" value="BAF66367.1"/>
    <property type="molecule type" value="Genomic_DNA"/>
</dbReference>
<dbReference type="PIR" id="A89776">
    <property type="entry name" value="A89776"/>
</dbReference>
<dbReference type="SMR" id="P95695"/>
<dbReference type="KEGG" id="sae:NWMN_0095"/>
<dbReference type="HOGENOM" id="CLU_082668_1_1_9"/>
<dbReference type="Proteomes" id="UP000006386">
    <property type="component" value="Chromosome"/>
</dbReference>
<dbReference type="GO" id="GO:0005886">
    <property type="term" value="C:plasma membrane"/>
    <property type="evidence" value="ECO:0007669"/>
    <property type="project" value="UniProtKB-SubCell"/>
</dbReference>
<dbReference type="GO" id="GO:0005351">
    <property type="term" value="F:carbohydrate:proton symporter activity"/>
    <property type="evidence" value="ECO:0007669"/>
    <property type="project" value="InterPro"/>
</dbReference>
<dbReference type="GO" id="GO:0004713">
    <property type="term" value="F:protein tyrosine kinase activity"/>
    <property type="evidence" value="ECO:0007669"/>
    <property type="project" value="TreeGrafter"/>
</dbReference>
<dbReference type="GO" id="GO:0000271">
    <property type="term" value="P:polysaccharide biosynthetic process"/>
    <property type="evidence" value="ECO:0007669"/>
    <property type="project" value="UniProtKB-KW"/>
</dbReference>
<dbReference type="GO" id="GO:0015774">
    <property type="term" value="P:polysaccharide transport"/>
    <property type="evidence" value="ECO:0007669"/>
    <property type="project" value="InterPro"/>
</dbReference>
<dbReference type="InterPro" id="IPR050445">
    <property type="entry name" value="Bact_polysacc_biosynth/exp"/>
</dbReference>
<dbReference type="InterPro" id="IPR005701">
    <property type="entry name" value="CpsC-like"/>
</dbReference>
<dbReference type="InterPro" id="IPR003856">
    <property type="entry name" value="LPS_length_determ_N_term"/>
</dbReference>
<dbReference type="NCBIfam" id="TIGR01006">
    <property type="entry name" value="polys_exp_MPA1"/>
    <property type="match status" value="1"/>
</dbReference>
<dbReference type="PANTHER" id="PTHR32309:SF13">
    <property type="entry name" value="FERRIC ENTEROBACTIN TRANSPORT PROTEIN FEPE"/>
    <property type="match status" value="1"/>
</dbReference>
<dbReference type="PANTHER" id="PTHR32309">
    <property type="entry name" value="TYROSINE-PROTEIN KINASE"/>
    <property type="match status" value="1"/>
</dbReference>
<dbReference type="Pfam" id="PF02706">
    <property type="entry name" value="Wzz"/>
    <property type="match status" value="1"/>
</dbReference>
<organism>
    <name type="scientific">Staphylococcus aureus (strain Newman)</name>
    <dbReference type="NCBI Taxonomy" id="426430"/>
    <lineage>
        <taxon>Bacteria</taxon>
        <taxon>Bacillati</taxon>
        <taxon>Bacillota</taxon>
        <taxon>Bacilli</taxon>
        <taxon>Bacillales</taxon>
        <taxon>Staphylococcaceae</taxon>
        <taxon>Staphylococcus</taxon>
    </lineage>
</organism>